<accession>Q9BSJ1</accession>
<accession>A6NMG2</accession>
<keyword id="KW-0025">Alternative splicing</keyword>
<keyword id="KW-0479">Metal-binding</keyword>
<keyword id="KW-1267">Proteomics identification</keyword>
<keyword id="KW-1185">Reference proteome</keyword>
<keyword id="KW-0862">Zinc</keyword>
<keyword id="KW-0863">Zinc-finger</keyword>
<proteinExistence type="evidence at protein level"/>
<feature type="chain" id="PRO_0000328724" description="Tripartite motif-containing protein 51">
    <location>
        <begin position="1"/>
        <end position="452"/>
    </location>
</feature>
<feature type="domain" description="B30.2/SPRY" evidence="3">
    <location>
        <begin position="269"/>
        <end position="452"/>
    </location>
</feature>
<feature type="zinc finger region" description="RING-type" evidence="2">
    <location>
        <begin position="15"/>
        <end position="56"/>
    </location>
</feature>
<feature type="zinc finger region" description="B box-type" evidence="1">
    <location>
        <begin position="88"/>
        <end position="129"/>
    </location>
</feature>
<feature type="binding site" evidence="1">
    <location>
        <position position="93"/>
    </location>
    <ligand>
        <name>Zn(2+)</name>
        <dbReference type="ChEBI" id="CHEBI:29105"/>
    </ligand>
</feature>
<feature type="binding site" evidence="1">
    <location>
        <position position="96"/>
    </location>
    <ligand>
        <name>Zn(2+)</name>
        <dbReference type="ChEBI" id="CHEBI:29105"/>
    </ligand>
</feature>
<feature type="binding site" evidence="1">
    <location>
        <position position="115"/>
    </location>
    <ligand>
        <name>Zn(2+)</name>
        <dbReference type="ChEBI" id="CHEBI:29105"/>
    </ligand>
</feature>
<feature type="binding site" evidence="1">
    <location>
        <position position="121"/>
    </location>
    <ligand>
        <name>Zn(2+)</name>
        <dbReference type="ChEBI" id="CHEBI:29105"/>
    </ligand>
</feature>
<feature type="splice variant" id="VSP_039765" description="In isoform 2." evidence="4">
    <location>
        <begin position="1"/>
        <end position="143"/>
    </location>
</feature>
<comment type="alternative products">
    <event type="alternative splicing"/>
    <isoform>
        <id>Q9BSJ1-1</id>
        <name>1</name>
        <sequence type="displayed"/>
    </isoform>
    <isoform>
        <id>Q9BSJ1-2</id>
        <name>2</name>
        <sequence type="described" ref="VSP_039765"/>
    </isoform>
</comment>
<comment type="similarity">
    <text evidence="5">Belongs to the TRIM/RBCC family.</text>
</comment>
<comment type="sequence caution" evidence="5">
    <conflict type="erroneous initiation">
        <sequence resource="EMBL-CDS" id="AAH05014"/>
    </conflict>
    <text>Truncated N-terminus.</text>
</comment>
<gene>
    <name type="primary">TRIM51</name>
    <name type="synonym">SPRYD5</name>
</gene>
<name>TRI51_HUMAN</name>
<reference key="1">
    <citation type="journal article" date="2006" name="Nature">
        <title>Human chromosome 11 DNA sequence and analysis including novel gene identification.</title>
        <authorList>
            <person name="Taylor T.D."/>
            <person name="Noguchi H."/>
            <person name="Totoki Y."/>
            <person name="Toyoda A."/>
            <person name="Kuroki Y."/>
            <person name="Dewar K."/>
            <person name="Lloyd C."/>
            <person name="Itoh T."/>
            <person name="Takeda T."/>
            <person name="Kim D.-W."/>
            <person name="She X."/>
            <person name="Barlow K.F."/>
            <person name="Bloom T."/>
            <person name="Bruford E."/>
            <person name="Chang J.L."/>
            <person name="Cuomo C.A."/>
            <person name="Eichler E."/>
            <person name="FitzGerald M.G."/>
            <person name="Jaffe D.B."/>
            <person name="LaButti K."/>
            <person name="Nicol R."/>
            <person name="Park H.-S."/>
            <person name="Seaman C."/>
            <person name="Sougnez C."/>
            <person name="Yang X."/>
            <person name="Zimmer A.R."/>
            <person name="Zody M.C."/>
            <person name="Birren B.W."/>
            <person name="Nusbaum C."/>
            <person name="Fujiyama A."/>
            <person name="Hattori M."/>
            <person name="Rogers J."/>
            <person name="Lander E.S."/>
            <person name="Sakaki Y."/>
        </authorList>
    </citation>
    <scope>NUCLEOTIDE SEQUENCE [LARGE SCALE GENOMIC DNA]</scope>
</reference>
<reference key="2">
    <citation type="submission" date="2005-07" db="EMBL/GenBank/DDBJ databases">
        <authorList>
            <person name="Mural R.J."/>
            <person name="Istrail S."/>
            <person name="Sutton G.G."/>
            <person name="Florea L."/>
            <person name="Halpern A.L."/>
            <person name="Mobarry C.M."/>
            <person name="Lippert R."/>
            <person name="Walenz B."/>
            <person name="Shatkay H."/>
            <person name="Dew I."/>
            <person name="Miller J.R."/>
            <person name="Flanigan M.J."/>
            <person name="Edwards N.J."/>
            <person name="Bolanos R."/>
            <person name="Fasulo D."/>
            <person name="Halldorsson B.V."/>
            <person name="Hannenhalli S."/>
            <person name="Turner R."/>
            <person name="Yooseph S."/>
            <person name="Lu F."/>
            <person name="Nusskern D.R."/>
            <person name="Shue B.C."/>
            <person name="Zheng X.H."/>
            <person name="Zhong F."/>
            <person name="Delcher A.L."/>
            <person name="Huson D.H."/>
            <person name="Kravitz S.A."/>
            <person name="Mouchard L."/>
            <person name="Reinert K."/>
            <person name="Remington K.A."/>
            <person name="Clark A.G."/>
            <person name="Waterman M.S."/>
            <person name="Eichler E.E."/>
            <person name="Adams M.D."/>
            <person name="Hunkapiller M.W."/>
            <person name="Myers E.W."/>
            <person name="Venter J.C."/>
        </authorList>
    </citation>
    <scope>NUCLEOTIDE SEQUENCE [LARGE SCALE GENOMIC DNA]</scope>
</reference>
<reference key="3">
    <citation type="journal article" date="2004" name="Genome Res.">
        <title>The status, quality, and expansion of the NIH full-length cDNA project: the Mammalian Gene Collection (MGC).</title>
        <authorList>
            <consortium name="The MGC Project Team"/>
        </authorList>
    </citation>
    <scope>NUCLEOTIDE SEQUENCE [LARGE SCALE MRNA] (ISOFORM 2)</scope>
    <source>
        <tissue>Placenta</tissue>
    </source>
</reference>
<reference key="4">
    <citation type="submission" date="2005-09" db="EMBL/GenBank/DDBJ databases">
        <title>Exhaustive RT-PCR and sequencing of all novel TWINSCAN predictions in human.</title>
        <authorList>
            <person name="Stevens M."/>
            <person name="Wei C."/>
            <person name="Gross S.S."/>
            <person name="McPherson J."/>
            <person name="Brent M.R."/>
        </authorList>
    </citation>
    <scope>NUCLEOTIDE SEQUENCE [MRNA] OF 83-259 (ISOFORM 1)</scope>
</reference>
<evidence type="ECO:0000255" key="1">
    <source>
        <dbReference type="PROSITE-ProRule" id="PRU00024"/>
    </source>
</evidence>
<evidence type="ECO:0000255" key="2">
    <source>
        <dbReference type="PROSITE-ProRule" id="PRU00175"/>
    </source>
</evidence>
<evidence type="ECO:0000255" key="3">
    <source>
        <dbReference type="PROSITE-ProRule" id="PRU00548"/>
    </source>
</evidence>
<evidence type="ECO:0000303" key="4">
    <source>
    </source>
</evidence>
<evidence type="ECO:0000305" key="5"/>
<protein>
    <recommendedName>
        <fullName>Tripartite motif-containing protein 51</fullName>
    </recommendedName>
    <alternativeName>
        <fullName>SPRY domain-containing protein 5</fullName>
    </alternativeName>
</protein>
<sequence length="452" mass="52285">MNSGILQVFQRALTCPICMNYFLDPVTIDCGHSFCRPCLYLNWQDTAVLAQCSECKKTTRQRNLNTDICLKNMAFIARKASLRQFLSSEEQICGMHRETKKMFCEVDKSLLCLPCSNSQEHRNHIHCPIEWAAEERREELLKKMQSLWEKACENLRNLNMETTRTRCWKDYVSLRIEAIRAEYQKMPAFLHEEEQHHLERLRKEGEDIFQQLNESKARMEHSRELLRGMYEDLKQMCHKADVELLQAFGDILHRYESLLLQVSEPVNPELSAGPITGLLDSLSGFRVDFTLQPERANSHIFLCGDLRSMNVGCDPQDDPDITGKSECFLVWGAQAFTSGKYYWEVHMGDSWNWAFGVCNNYWKEKRQNDKIDGEEGLFLLGCVKEDTHCSLFTTSPLVVQYVPRPTSTVGLFLDCEGRTVSFVDVDQSSLIYTIPNCSFSPPLRPIFCCSHF</sequence>
<organism>
    <name type="scientific">Homo sapiens</name>
    <name type="common">Human</name>
    <dbReference type="NCBI Taxonomy" id="9606"/>
    <lineage>
        <taxon>Eukaryota</taxon>
        <taxon>Metazoa</taxon>
        <taxon>Chordata</taxon>
        <taxon>Craniata</taxon>
        <taxon>Vertebrata</taxon>
        <taxon>Euteleostomi</taxon>
        <taxon>Mammalia</taxon>
        <taxon>Eutheria</taxon>
        <taxon>Euarchontoglires</taxon>
        <taxon>Primates</taxon>
        <taxon>Haplorrhini</taxon>
        <taxon>Catarrhini</taxon>
        <taxon>Hominidae</taxon>
        <taxon>Homo</taxon>
    </lineage>
</organism>
<dbReference type="EMBL" id="AC036111">
    <property type="status" value="NOT_ANNOTATED_CDS"/>
    <property type="molecule type" value="Genomic_DNA"/>
</dbReference>
<dbReference type="EMBL" id="CH471076">
    <property type="protein sequence ID" value="EAW73688.1"/>
    <property type="molecule type" value="Genomic_DNA"/>
</dbReference>
<dbReference type="EMBL" id="CH471076">
    <property type="protein sequence ID" value="EAW73689.1"/>
    <property type="molecule type" value="Genomic_DNA"/>
</dbReference>
<dbReference type="EMBL" id="BC005014">
    <property type="protein sequence ID" value="AAH05014.1"/>
    <property type="status" value="ALT_INIT"/>
    <property type="molecule type" value="mRNA"/>
</dbReference>
<dbReference type="EMBL" id="DV080294">
    <property type="status" value="NOT_ANNOTATED_CDS"/>
    <property type="molecule type" value="mRNA"/>
</dbReference>
<dbReference type="RefSeq" id="NP_116070.2">
    <molecule id="Q9BSJ1-1"/>
    <property type="nucleotide sequence ID" value="NM_032681.4"/>
</dbReference>
<dbReference type="SMR" id="Q9BSJ1"/>
<dbReference type="BioGRID" id="124248">
    <property type="interactions" value="6"/>
</dbReference>
<dbReference type="FunCoup" id="Q9BSJ1">
    <property type="interactions" value="7"/>
</dbReference>
<dbReference type="IntAct" id="Q9BSJ1">
    <property type="interactions" value="4"/>
</dbReference>
<dbReference type="MINT" id="Q9BSJ1"/>
<dbReference type="STRING" id="9606.ENSP00000395086"/>
<dbReference type="iPTMnet" id="Q9BSJ1"/>
<dbReference type="PhosphoSitePlus" id="Q9BSJ1"/>
<dbReference type="BioMuta" id="TRIM51"/>
<dbReference type="DMDM" id="306526243"/>
<dbReference type="jPOST" id="Q9BSJ1"/>
<dbReference type="PaxDb" id="9606-ENSP00000395086"/>
<dbReference type="PeptideAtlas" id="Q9BSJ1"/>
<dbReference type="Antibodypedia" id="27162">
    <property type="antibodies" value="130 antibodies from 23 providers"/>
</dbReference>
<dbReference type="DNASU" id="84767"/>
<dbReference type="Ensembl" id="ENST00000244891.3">
    <molecule id="Q9BSJ1-2"/>
    <property type="protein sequence ID" value="ENSP00000244891.3"/>
    <property type="gene ID" value="ENSG00000124900.12"/>
</dbReference>
<dbReference type="Ensembl" id="ENST00000449290.6">
    <molecule id="Q9BSJ1-1"/>
    <property type="protein sequence ID" value="ENSP00000395086.2"/>
    <property type="gene ID" value="ENSG00000124900.12"/>
</dbReference>
<dbReference type="GeneID" id="84767"/>
<dbReference type="KEGG" id="hsa:84767"/>
<dbReference type="MANE-Select" id="ENST00000449290.6">
    <property type="protein sequence ID" value="ENSP00000395086.2"/>
    <property type="RefSeq nucleotide sequence ID" value="NM_032681.4"/>
    <property type="RefSeq protein sequence ID" value="NP_116070.2"/>
</dbReference>
<dbReference type="UCSC" id="uc010rip.3">
    <molecule id="Q9BSJ1-1"/>
    <property type="organism name" value="human"/>
</dbReference>
<dbReference type="AGR" id="HGNC:19023"/>
<dbReference type="CTD" id="84767"/>
<dbReference type="GeneCards" id="TRIM51"/>
<dbReference type="HGNC" id="HGNC:19023">
    <property type="gene designation" value="TRIM51"/>
</dbReference>
<dbReference type="HPA" id="ENSG00000124900">
    <property type="expression patterns" value="Not detected"/>
</dbReference>
<dbReference type="neXtProt" id="NX_Q9BSJ1"/>
<dbReference type="OpenTargets" id="ENSG00000124900"/>
<dbReference type="PharmGKB" id="PA134949173"/>
<dbReference type="VEuPathDB" id="HostDB:ENSG00000124900"/>
<dbReference type="eggNOG" id="KOG2177">
    <property type="taxonomic scope" value="Eukaryota"/>
</dbReference>
<dbReference type="GeneTree" id="ENSGT00940000163419"/>
<dbReference type="HOGENOM" id="CLU_013137_0_3_1"/>
<dbReference type="InParanoid" id="Q9BSJ1"/>
<dbReference type="OMA" id="LNCEDRT"/>
<dbReference type="OrthoDB" id="9513033at2759"/>
<dbReference type="PAN-GO" id="Q9BSJ1">
    <property type="GO annotations" value="5 GO annotations based on evolutionary models"/>
</dbReference>
<dbReference type="PhylomeDB" id="Q9BSJ1"/>
<dbReference type="TreeFam" id="TF338674"/>
<dbReference type="PathwayCommons" id="Q9BSJ1"/>
<dbReference type="SignaLink" id="Q9BSJ1"/>
<dbReference type="SIGNOR" id="Q9BSJ1"/>
<dbReference type="BioGRID-ORCS" id="84767">
    <property type="hits" value="2 hits in 246 CRISPR screens"/>
</dbReference>
<dbReference type="GenomeRNAi" id="84767"/>
<dbReference type="Pharos" id="Q9BSJ1">
    <property type="development level" value="Tdark"/>
</dbReference>
<dbReference type="PRO" id="PR:Q9BSJ1"/>
<dbReference type="Proteomes" id="UP000005640">
    <property type="component" value="Chromosome 11"/>
</dbReference>
<dbReference type="RNAct" id="Q9BSJ1">
    <property type="molecule type" value="protein"/>
</dbReference>
<dbReference type="Bgee" id="ENSG00000124900">
    <property type="expression patterns" value="Expressed in male germ line stem cell (sensu Vertebrata) in testis and 1 other cell type or tissue"/>
</dbReference>
<dbReference type="GO" id="GO:0005737">
    <property type="term" value="C:cytoplasm"/>
    <property type="evidence" value="ECO:0000318"/>
    <property type="project" value="GO_Central"/>
</dbReference>
<dbReference type="GO" id="GO:0061630">
    <property type="term" value="F:ubiquitin protein ligase activity"/>
    <property type="evidence" value="ECO:0000318"/>
    <property type="project" value="GO_Central"/>
</dbReference>
<dbReference type="GO" id="GO:0008270">
    <property type="term" value="F:zinc ion binding"/>
    <property type="evidence" value="ECO:0007669"/>
    <property type="project" value="UniProtKB-KW"/>
</dbReference>
<dbReference type="GO" id="GO:0045087">
    <property type="term" value="P:innate immune response"/>
    <property type="evidence" value="ECO:0000318"/>
    <property type="project" value="GO_Central"/>
</dbReference>
<dbReference type="GO" id="GO:0010468">
    <property type="term" value="P:regulation of gene expression"/>
    <property type="evidence" value="ECO:0000318"/>
    <property type="project" value="GO_Central"/>
</dbReference>
<dbReference type="CDD" id="cd19783">
    <property type="entry name" value="Bbox2_TRIM43-like"/>
    <property type="match status" value="1"/>
</dbReference>
<dbReference type="CDD" id="cd16603">
    <property type="entry name" value="RING-HC_TRIM43-like_C-IV"/>
    <property type="match status" value="1"/>
</dbReference>
<dbReference type="Gene3D" id="2.60.120.920">
    <property type="match status" value="1"/>
</dbReference>
<dbReference type="Gene3D" id="3.30.160.60">
    <property type="entry name" value="Classic Zinc Finger"/>
    <property type="match status" value="1"/>
</dbReference>
<dbReference type="Gene3D" id="3.30.40.10">
    <property type="entry name" value="Zinc/RING finger domain, C3HC4 (zinc finger)"/>
    <property type="match status" value="1"/>
</dbReference>
<dbReference type="InterPro" id="IPR001870">
    <property type="entry name" value="B30.2/SPRY"/>
</dbReference>
<dbReference type="InterPro" id="IPR043136">
    <property type="entry name" value="B30.2/SPRY_sf"/>
</dbReference>
<dbReference type="InterPro" id="IPR003879">
    <property type="entry name" value="Butyrophylin_SPRY"/>
</dbReference>
<dbReference type="InterPro" id="IPR013320">
    <property type="entry name" value="ConA-like_dom_sf"/>
</dbReference>
<dbReference type="InterPro" id="IPR003877">
    <property type="entry name" value="SPRY_dom"/>
</dbReference>
<dbReference type="InterPro" id="IPR050143">
    <property type="entry name" value="TRIM/RBCC"/>
</dbReference>
<dbReference type="InterPro" id="IPR000315">
    <property type="entry name" value="Znf_B-box"/>
</dbReference>
<dbReference type="InterPro" id="IPR001841">
    <property type="entry name" value="Znf_RING"/>
</dbReference>
<dbReference type="InterPro" id="IPR013083">
    <property type="entry name" value="Znf_RING/FYVE/PHD"/>
</dbReference>
<dbReference type="InterPro" id="IPR017907">
    <property type="entry name" value="Znf_RING_CS"/>
</dbReference>
<dbReference type="PANTHER" id="PTHR24103">
    <property type="entry name" value="E3 UBIQUITIN-PROTEIN LIGASE TRIM"/>
    <property type="match status" value="1"/>
</dbReference>
<dbReference type="Pfam" id="PF00622">
    <property type="entry name" value="SPRY"/>
    <property type="match status" value="1"/>
</dbReference>
<dbReference type="Pfam" id="PF15227">
    <property type="entry name" value="zf-C3HC4_4"/>
    <property type="match status" value="1"/>
</dbReference>
<dbReference type="PRINTS" id="PR01407">
    <property type="entry name" value="BUTYPHLNCDUF"/>
</dbReference>
<dbReference type="SMART" id="SM00336">
    <property type="entry name" value="BBOX"/>
    <property type="match status" value="1"/>
</dbReference>
<dbReference type="SMART" id="SM00184">
    <property type="entry name" value="RING"/>
    <property type="match status" value="1"/>
</dbReference>
<dbReference type="SUPFAM" id="SSF57845">
    <property type="entry name" value="B-box zinc-binding domain"/>
    <property type="match status" value="1"/>
</dbReference>
<dbReference type="SUPFAM" id="SSF49899">
    <property type="entry name" value="Concanavalin A-like lectins/glucanases"/>
    <property type="match status" value="1"/>
</dbReference>
<dbReference type="SUPFAM" id="SSF57850">
    <property type="entry name" value="RING/U-box"/>
    <property type="match status" value="1"/>
</dbReference>
<dbReference type="PROSITE" id="PS50188">
    <property type="entry name" value="B302_SPRY"/>
    <property type="match status" value="1"/>
</dbReference>
<dbReference type="PROSITE" id="PS50119">
    <property type="entry name" value="ZF_BBOX"/>
    <property type="match status" value="1"/>
</dbReference>
<dbReference type="PROSITE" id="PS00518">
    <property type="entry name" value="ZF_RING_1"/>
    <property type="match status" value="1"/>
</dbReference>
<dbReference type="PROSITE" id="PS50089">
    <property type="entry name" value="ZF_RING_2"/>
    <property type="match status" value="1"/>
</dbReference>